<proteinExistence type="evidence at protein level"/>
<sequence>MALTFQEILDRIRIIDRDVTELNRLKSRLPADRPYSSSLQISFDKQINELLNERVGLMELEVLDPPSWILGVPTTGISQETPVPLKGLFPSGDLSKEKPDDQDVINFLRELPKTEIHLHLEACVNKDTMKRLMAKNGINVTDEEFEAKFNFKDLNSFIQVFFFIQSLVKEPSDFSFFIESLAEYMRANNILYTEVFFAPSKFIQNGLDFEEMIDFLVNRIREEKENDGIVIRLLVDVSRSFGPENAMKNLDRVLKLRHPEVIGIGLGGAELMGPARDYQGVFQKAREAGLRVVAHSGEDDGPWAIWEAVELLKAERIGHGTSAIQDPELVKYLRENHIPIEICVTSNVFTGKYVRKEQNHPVRYYYDQGLPLSINTDDPEIFNVNLTYEYYKLWRFLDFSLDEIVDLIRQGVFASFHPNKESLWAEMEKNIHLVKTRYGLKR</sequence>
<reference key="1">
    <citation type="journal article" date="2004" name="J. Bacteriol.">
        <title>Comparative genomics of two Leptospira interrogans serovars reveals novel insights into physiology and pathogenesis.</title>
        <authorList>
            <person name="Nascimento A.L.T.O."/>
            <person name="Ko A.I."/>
            <person name="Martins E.A.L."/>
            <person name="Monteiro-Vitorello C.B."/>
            <person name="Ho P.L."/>
            <person name="Haake D.A."/>
            <person name="Verjovski-Almeida S."/>
            <person name="Hartskeerl R.A."/>
            <person name="Marques M.V."/>
            <person name="Oliveira M.C."/>
            <person name="Menck C.F.M."/>
            <person name="Leite L.C.C."/>
            <person name="Carrer H."/>
            <person name="Coutinho L.L."/>
            <person name="Degrave W.M."/>
            <person name="Dellagostin O.A."/>
            <person name="El-Dorry H."/>
            <person name="Ferro E.S."/>
            <person name="Ferro M.I.T."/>
            <person name="Furlan L.R."/>
            <person name="Gamberini M."/>
            <person name="Giglioti E.A."/>
            <person name="Goes-Neto A."/>
            <person name="Goldman G.H."/>
            <person name="Goldman M.H.S."/>
            <person name="Harakava R."/>
            <person name="Jeronimo S.M.B."/>
            <person name="Junqueira-de-Azevedo I.L.M."/>
            <person name="Kimura E.T."/>
            <person name="Kuramae E.E."/>
            <person name="Lemos E.G.M."/>
            <person name="Lemos M.V.F."/>
            <person name="Marino C.L."/>
            <person name="Nunes L.R."/>
            <person name="de Oliveira R.C."/>
            <person name="Pereira G.G."/>
            <person name="Reis M.S."/>
            <person name="Schriefer A."/>
            <person name="Siqueira W.J."/>
            <person name="Sommer P."/>
            <person name="Tsai S.M."/>
            <person name="Simpson A.J.G."/>
            <person name="Ferro J.A."/>
            <person name="Camargo L.E.A."/>
            <person name="Kitajima J.P."/>
            <person name="Setubal J.C."/>
            <person name="Van Sluys M.A."/>
        </authorList>
    </citation>
    <scope>NUCLEOTIDE SEQUENCE [LARGE SCALE GENOMIC DNA]</scope>
    <source>
        <strain>Fiocruz L1-130</strain>
    </source>
</reference>
<reference key="2">
    <citation type="journal article" date="2013" name="ACS Chem. Biol.">
        <title>Discovery of a cAMP deaminase that quenches cyclic AMP-dependent regulation.</title>
        <authorList>
            <person name="Goble A.M."/>
            <person name="Feng Y."/>
            <person name="Raushel F.M."/>
            <person name="Cronan J.E."/>
        </authorList>
    </citation>
    <scope>CATALYTIC ACTIVITY</scope>
    <scope>NOMENCLATURE</scope>
    <scope>FUNCTION</scope>
</reference>
<comment type="function">
    <text evidence="3">Deaminates cAMP into cIMP, thereby repressing cAMP dependent metabolism or genes.</text>
</comment>
<comment type="catalytic activity">
    <reaction evidence="3">
        <text>3',5'-cyclic AMP + H2O + H(+) = 3',5'-cyclic IMP + NH4(+)</text>
        <dbReference type="Rhea" id="RHEA:22908"/>
        <dbReference type="ChEBI" id="CHEBI:15377"/>
        <dbReference type="ChEBI" id="CHEBI:15378"/>
        <dbReference type="ChEBI" id="CHEBI:28938"/>
        <dbReference type="ChEBI" id="CHEBI:58165"/>
        <dbReference type="ChEBI" id="CHEBI:134197"/>
        <dbReference type="EC" id="3.5.4.46"/>
    </reaction>
    <physiologicalReaction direction="left-to-right" evidence="3">
        <dbReference type="Rhea" id="RHEA:22909"/>
    </physiologicalReaction>
</comment>
<comment type="cofactor">
    <cofactor evidence="1">
        <name>Zn(2+)</name>
        <dbReference type="ChEBI" id="CHEBI:29105"/>
    </cofactor>
</comment>
<comment type="biophysicochemical properties">
    <kinetics>
        <KM evidence="3">27 uM for cAMP</KM>
    </kinetics>
</comment>
<comment type="similarity">
    <text evidence="2">Belongs to the metallo-dependent hydrolases superfamily. Adenosine and AMP deaminases family.</text>
</comment>
<gene>
    <name type="primary">add</name>
    <name type="ordered locus">LIC_10459</name>
</gene>
<evidence type="ECO:0000250" key="1">
    <source>
        <dbReference type="UniProtKB" id="Q9I6Y4"/>
    </source>
</evidence>
<evidence type="ECO:0000255" key="2"/>
<evidence type="ECO:0000269" key="3">
    <source>
    </source>
</evidence>
<evidence type="ECO:0000303" key="4">
    <source>
    </source>
</evidence>
<accession>Q72V44</accession>
<name>CADD_LEPIC</name>
<keyword id="KW-0378">Hydrolase</keyword>
<keyword id="KW-0479">Metal-binding</keyword>
<keyword id="KW-0862">Zinc</keyword>
<feature type="chain" id="PRO_0000446370" description="Cyclic adenylate deaminase">
    <location>
        <begin position="1"/>
        <end position="442"/>
    </location>
</feature>
<dbReference type="EC" id="3.5.4.46" evidence="3"/>
<dbReference type="EMBL" id="AE016823">
    <property type="protein sequence ID" value="AAS69080.1"/>
    <property type="molecule type" value="Genomic_DNA"/>
</dbReference>
<dbReference type="SMR" id="Q72V44"/>
<dbReference type="KEGG" id="lic:LIC_10459"/>
<dbReference type="HOGENOM" id="CLU_039228_7_1_12"/>
<dbReference type="BRENDA" id="3.5.4.46">
    <property type="organism ID" value="15061"/>
</dbReference>
<dbReference type="Proteomes" id="UP000007037">
    <property type="component" value="Chromosome I"/>
</dbReference>
<dbReference type="GO" id="GO:0090612">
    <property type="term" value="F:cAMP deaminase activity"/>
    <property type="evidence" value="ECO:0000314"/>
    <property type="project" value="CACAO"/>
</dbReference>
<dbReference type="GO" id="GO:0046872">
    <property type="term" value="F:metal ion binding"/>
    <property type="evidence" value="ECO:0007669"/>
    <property type="project" value="UniProtKB-KW"/>
</dbReference>
<dbReference type="GO" id="GO:0009168">
    <property type="term" value="P:purine ribonucleoside monophosphate biosynthetic process"/>
    <property type="evidence" value="ECO:0007669"/>
    <property type="project" value="InterPro"/>
</dbReference>
<dbReference type="CDD" id="cd01320">
    <property type="entry name" value="ADA"/>
    <property type="match status" value="1"/>
</dbReference>
<dbReference type="FunFam" id="3.20.20.140:FF:000069">
    <property type="entry name" value="Adenosine deaminase"/>
    <property type="match status" value="1"/>
</dbReference>
<dbReference type="Gene3D" id="3.20.20.140">
    <property type="entry name" value="Metal-dependent hydrolases"/>
    <property type="match status" value="1"/>
</dbReference>
<dbReference type="InterPro" id="IPR006650">
    <property type="entry name" value="A/AMP_deam_AS"/>
</dbReference>
<dbReference type="InterPro" id="IPR001365">
    <property type="entry name" value="A_deaminase_dom"/>
</dbReference>
<dbReference type="InterPro" id="IPR006330">
    <property type="entry name" value="Ado/ade_deaminase"/>
</dbReference>
<dbReference type="InterPro" id="IPR032466">
    <property type="entry name" value="Metal_Hydrolase"/>
</dbReference>
<dbReference type="NCBIfam" id="TIGR01430">
    <property type="entry name" value="aden_deam"/>
    <property type="match status" value="1"/>
</dbReference>
<dbReference type="PANTHER" id="PTHR43114">
    <property type="entry name" value="ADENINE DEAMINASE"/>
    <property type="match status" value="1"/>
</dbReference>
<dbReference type="PANTHER" id="PTHR43114:SF6">
    <property type="entry name" value="ADENINE DEAMINASE"/>
    <property type="match status" value="1"/>
</dbReference>
<dbReference type="Pfam" id="PF00962">
    <property type="entry name" value="A_deaminase"/>
    <property type="match status" value="1"/>
</dbReference>
<dbReference type="SUPFAM" id="SSF51556">
    <property type="entry name" value="Metallo-dependent hydrolases"/>
    <property type="match status" value="1"/>
</dbReference>
<dbReference type="PROSITE" id="PS00485">
    <property type="entry name" value="A_DEAMINASE"/>
    <property type="match status" value="1"/>
</dbReference>
<organism>
    <name type="scientific">Leptospira interrogans serogroup Icterohaemorrhagiae serovar copenhageni (strain Fiocruz L1-130)</name>
    <dbReference type="NCBI Taxonomy" id="267671"/>
    <lineage>
        <taxon>Bacteria</taxon>
        <taxon>Pseudomonadati</taxon>
        <taxon>Spirochaetota</taxon>
        <taxon>Spirochaetia</taxon>
        <taxon>Leptospirales</taxon>
        <taxon>Leptospiraceae</taxon>
        <taxon>Leptospira</taxon>
    </lineage>
</organism>
<protein>
    <recommendedName>
        <fullName evidence="4">Cyclic adenylate deaminase</fullName>
        <shortName evidence="4">CadD</shortName>
        <ecNumber evidence="3">3.5.4.46</ecNumber>
    </recommendedName>
    <alternativeName>
        <fullName>cAMP deaminase</fullName>
    </alternativeName>
</protein>